<keyword id="KW-0903">Direct protein sequencing</keyword>
<accession>P82004</accession>
<organismHost>
    <name type="scientific">Crustacea</name>
    <dbReference type="NCBI Taxonomy" id="6657"/>
</organismHost>
<proteinExistence type="evidence at protein level"/>
<feature type="chain" id="PRO_0000222996" description="25 kDa structural polyprotein">
    <location>
        <begin position="1"/>
        <end position="12" status="greater than"/>
    </location>
</feature>
<feature type="non-terminal residue">
    <location>
        <position position="12"/>
    </location>
</feature>
<reference key="1">
    <citation type="journal article" date="2000" name="Arch. Virol.">
        <title>Protein analysis of geographic isolates of shrimp white spot syndrome virus.</title>
        <authorList>
            <person name="Wang Q."/>
            <person name="Poulos B.T."/>
            <person name="Lightner D.V."/>
        </authorList>
    </citation>
    <scope>PROTEIN SEQUENCE</scope>
    <source>
        <strain>South Carolina</strain>
    </source>
</reference>
<protein>
    <recommendedName>
        <fullName>25 kDa structural polyprotein</fullName>
    </recommendedName>
</protein>
<comment type="function">
    <text>Structural component of the virion.</text>
</comment>
<name>V25K_WSSV</name>
<sequence>MDLSFTLSVVTA</sequence>
<organism>
    <name type="scientific">White spot syndrome virus</name>
    <name type="common">WSSV</name>
    <name type="synonym">White spot bacilliform virus</name>
    <dbReference type="NCBI Taxonomy" id="92652"/>
    <lineage>
        <taxon>Viruses</taxon>
        <taxon>Viruses incertae sedis</taxon>
        <taxon>Naldaviricetes</taxon>
        <taxon>Nimaviridae</taxon>
        <taxon>Whispovirus</taxon>
        <taxon>White spot syndrome virus</taxon>
    </lineage>
</organism>